<dbReference type="EMBL" id="AM040264">
    <property type="protein sequence ID" value="CAJ10616.1"/>
    <property type="status" value="ALT_INIT"/>
    <property type="molecule type" value="Genomic_DNA"/>
</dbReference>
<dbReference type="RefSeq" id="WP_002971512.1">
    <property type="nucleotide sequence ID" value="NZ_KN046823.1"/>
</dbReference>
<dbReference type="SMR" id="Q2YMY7"/>
<dbReference type="STRING" id="359391.BAB1_0660"/>
<dbReference type="KEGG" id="bmf:BAB1_0660"/>
<dbReference type="PATRIC" id="fig|359391.11.peg.2974"/>
<dbReference type="HOGENOM" id="CLU_044836_0_0_5"/>
<dbReference type="PhylomeDB" id="Q2YMY7"/>
<dbReference type="Proteomes" id="UP000002719">
    <property type="component" value="Chromosome I"/>
</dbReference>
<dbReference type="GO" id="GO:0009279">
    <property type="term" value="C:cell outer membrane"/>
    <property type="evidence" value="ECO:0007669"/>
    <property type="project" value="UniProtKB-SubCell"/>
</dbReference>
<dbReference type="GO" id="GO:0046930">
    <property type="term" value="C:pore complex"/>
    <property type="evidence" value="ECO:0007669"/>
    <property type="project" value="UniProtKB-KW"/>
</dbReference>
<dbReference type="GO" id="GO:0015288">
    <property type="term" value="F:porin activity"/>
    <property type="evidence" value="ECO:0007669"/>
    <property type="project" value="UniProtKB-KW"/>
</dbReference>
<dbReference type="GO" id="GO:0006811">
    <property type="term" value="P:monoatomic ion transport"/>
    <property type="evidence" value="ECO:0007669"/>
    <property type="project" value="UniProtKB-KW"/>
</dbReference>
<dbReference type="InterPro" id="IPR003684">
    <property type="entry name" value="Porin_alphabac"/>
</dbReference>
<dbReference type="Pfam" id="PF02530">
    <property type="entry name" value="Porin_2"/>
    <property type="match status" value="1"/>
</dbReference>
<dbReference type="SUPFAM" id="SSF56935">
    <property type="entry name" value="Porins"/>
    <property type="match status" value="1"/>
</dbReference>
<gene>
    <name type="primary">omp2b</name>
    <name type="ordered locus">BAB1_0660</name>
</gene>
<name>OMP2B_BRUA2</name>
<evidence type="ECO:0000250" key="1"/>
<evidence type="ECO:0000250" key="2">
    <source>
        <dbReference type="UniProtKB" id="Q44665"/>
    </source>
</evidence>
<evidence type="ECO:0000255" key="3"/>
<evidence type="ECO:0000305" key="4"/>
<proteinExistence type="inferred from homology"/>
<organism>
    <name type="scientific">Brucella abortus (strain 2308)</name>
    <dbReference type="NCBI Taxonomy" id="359391"/>
    <lineage>
        <taxon>Bacteria</taxon>
        <taxon>Pseudomonadati</taxon>
        <taxon>Pseudomonadota</taxon>
        <taxon>Alphaproteobacteria</taxon>
        <taxon>Hyphomicrobiales</taxon>
        <taxon>Brucellaceae</taxon>
        <taxon>Brucella/Ochrobactrum group</taxon>
        <taxon>Brucella</taxon>
    </lineage>
</organism>
<protein>
    <recommendedName>
        <fullName>Porin Omp2b</fullName>
    </recommendedName>
</protein>
<reference key="1">
    <citation type="journal article" date="2005" name="Infect. Immun.">
        <title>Whole-genome analyses of speciation events in pathogenic Brucellae.</title>
        <authorList>
            <person name="Chain P.S."/>
            <person name="Comerci D.J."/>
            <person name="Tolmasky M.E."/>
            <person name="Larimer F.W."/>
            <person name="Malfatti S.A."/>
            <person name="Vergez L.M."/>
            <person name="Aguero F."/>
            <person name="Land M.L."/>
            <person name="Ugalde R.A."/>
            <person name="Garcia E."/>
        </authorList>
    </citation>
    <scope>NUCLEOTIDE SEQUENCE [LARGE SCALE GENOMIC DNA]</scope>
    <source>
        <strain>2308</strain>
    </source>
</reference>
<feature type="signal peptide" evidence="3">
    <location>
        <begin position="1"/>
        <end position="22"/>
    </location>
</feature>
<feature type="chain" id="PRO_0000354008" description="Porin Omp2b">
    <location>
        <begin position="23"/>
        <end position="362"/>
    </location>
</feature>
<comment type="function">
    <text evidence="2">Forms passive diffusion pores that allow small molecular weight hydrophilic materials across the outer membrane.</text>
</comment>
<comment type="subunit">
    <text evidence="2">Homotrimer.</text>
</comment>
<comment type="subcellular location">
    <subcellularLocation>
        <location evidence="1">Cell outer membrane</location>
        <topology evidence="2">Multi-pass membrane protein</topology>
    </subcellularLocation>
</comment>
<comment type="domain">
    <text evidence="2">Consists of 16-stranded beta-barrel sheets, with large surface-exposed loops, that form a transmembrane pore at the center of each barrel. The pore is partially ocluded by a peptide loop that folds into the pore lumen.</text>
</comment>
<comment type="miscellaneous">
    <text evidence="2">The pore formed by Omp2a is larger than the one formed by Omp2b. Omp2b pores have optimal permeability to allow growth and protection against harmful compounds. The larger pore formed by Omp2a may be advantageous for intracellular growth, when the bacterium is competing with the host cell for nutrients whose concentration is particularly low within the phagosome.</text>
</comment>
<comment type="similarity">
    <text evidence="4">Belongs to the alphaproteobacteria porin family.</text>
</comment>
<comment type="sequence caution" evidence="4">
    <conflict type="erroneous initiation">
        <sequence resource="EMBL-CDS" id="CAJ10616"/>
    </conflict>
</comment>
<accession>Q2YMY7</accession>
<keyword id="KW-0998">Cell outer membrane</keyword>
<keyword id="KW-0406">Ion transport</keyword>
<keyword id="KW-0472">Membrane</keyword>
<keyword id="KW-0626">Porin</keyword>
<keyword id="KW-1185">Reference proteome</keyword>
<keyword id="KW-0732">Signal</keyword>
<keyword id="KW-0812">Transmembrane</keyword>
<keyword id="KW-1134">Transmembrane beta strand</keyword>
<keyword id="KW-0813">Transport</keyword>
<sequence>MNIKSLLLGSAAALVAASGAQAADAIVAPEPEAVEYVRVCDAYGAGYFYIPGTETCLRVHGYVRYDVKGGDDVYSGTDRNGWDKSARFALRVSTGSETELGTLKTFTELRFNYAANNSGVDGKYGNETSSGTVMEFAYIQLGGLRVGIDESEFHTFTGYLGDVINDDVISAGSYRTGKISYTFTGGNGFSAVIALEQGGDNDGGYTGTTNYHIDGYMPDVVGGLKYAGGWGSIAGVVAYDSVIEEWAAKVRGDVNITDQFSVWLQGAYSSAATPDQNYGQWGGDWAVWGGLKYQATQKAAFNLQAAHDDWGKTAVTANVAYELVPGFTVTPEVSYTKFGGEWKNTVAEDNAWGGIVRFQRSF</sequence>